<feature type="transit peptide" description="Mitochondrion" evidence="1">
    <location>
        <begin position="1"/>
        <end position="30"/>
    </location>
</feature>
<feature type="chain" id="PRO_0000002520" description="ATP synthase subunit 4, mitochondrial">
    <location>
        <begin position="31"/>
        <end position="237"/>
    </location>
</feature>
<feature type="sequence conflict" description="In Ref. 1; AAC64860." evidence="2" ref="1">
    <original>C</original>
    <variation>S</variation>
    <location>
        <position position="19"/>
    </location>
</feature>
<feature type="sequence conflict" description="In Ref. 1; AAC64860." evidence="2" ref="1">
    <original>A</original>
    <variation>R</variation>
    <location>
        <position position="66"/>
    </location>
</feature>
<feature type="sequence conflict" description="In Ref. 1; AAC64860." evidence="2" ref="1">
    <original>V</original>
    <variation>E</variation>
    <location>
        <position position="70"/>
    </location>
</feature>
<name>ATPF_KLULA</name>
<accession>O13349</accession>
<accession>Q6CM24</accession>
<sequence>MFRALTLKASARPVVAGLCSRQAPIAAVRYMSTPSPQDPKAKASSILDALPGNTALSKTGILATSAAAAVYAISNQLYVLNEETILVATFTGVVLAGIKFLAPAYNEFAENRVKQVSSILNSSRTKHVDAVKERIESVSELKNVSDTTKVLFDVSKETVKLEAEAFELKQQVDLAAEAKSVLDSWVRYEASVRQLQQQQIADSVVAKVQSELGNPKFQEKVLQQSVADVEKLLANLK</sequence>
<comment type="function">
    <text>Mitochondrial membrane ATP synthase (F(1)F(0) ATP synthase or Complex V) produces ATP from ADP in the presence of a proton gradient across the membrane which is generated by electron transport complexes of the respiratory chain. F-type ATPases consist of two structural domains, F(1) - containing the extramembraneous catalytic core, and F(0) - containing the membrane proton channel, linked together by a central stalk and a peripheral stalk. During catalysis, ATP synthesis in the catalytic domain of F(1) is coupled via a rotary mechanism of the central stalk subunits to proton translocation. Part of the complex F(0) domain and the peripheric stalk, which acts as a stator to hold the catalytic alpha(3)beta(3) subcomplex and subunit a/ATP6 static relative to the rotary elements.</text>
</comment>
<comment type="subcellular location">
    <subcellularLocation>
        <location>Mitochondrion</location>
    </subcellularLocation>
    <subcellularLocation>
        <location>Mitochondrion inner membrane</location>
    </subcellularLocation>
</comment>
<comment type="similarity">
    <text evidence="2">Belongs to the eukaryotic ATPase B chain family.</text>
</comment>
<dbReference type="EMBL" id="AF019222">
    <property type="protein sequence ID" value="AAC64860.1"/>
    <property type="molecule type" value="Genomic_DNA"/>
</dbReference>
<dbReference type="EMBL" id="CR382125">
    <property type="protein sequence ID" value="CAH00102.1"/>
    <property type="molecule type" value="Genomic_DNA"/>
</dbReference>
<dbReference type="RefSeq" id="XP_455015.1">
    <property type="nucleotide sequence ID" value="XM_455015.1"/>
</dbReference>
<dbReference type="SMR" id="O13349"/>
<dbReference type="FunCoup" id="O13349">
    <property type="interactions" value="495"/>
</dbReference>
<dbReference type="STRING" id="284590.O13349"/>
<dbReference type="PaxDb" id="284590-O13349"/>
<dbReference type="KEGG" id="kla:KLLA0_E23563g"/>
<dbReference type="eggNOG" id="KOG3976">
    <property type="taxonomic scope" value="Eukaryota"/>
</dbReference>
<dbReference type="HOGENOM" id="CLU_077208_0_0_1"/>
<dbReference type="InParanoid" id="O13349"/>
<dbReference type="OMA" id="YTEWADG"/>
<dbReference type="Proteomes" id="UP000000598">
    <property type="component" value="Chromosome E"/>
</dbReference>
<dbReference type="GO" id="GO:0005743">
    <property type="term" value="C:mitochondrial inner membrane"/>
    <property type="evidence" value="ECO:0007669"/>
    <property type="project" value="UniProtKB-SubCell"/>
</dbReference>
<dbReference type="GO" id="GO:0045259">
    <property type="term" value="C:proton-transporting ATP synthase complex"/>
    <property type="evidence" value="ECO:0007669"/>
    <property type="project" value="UniProtKB-KW"/>
</dbReference>
<dbReference type="GO" id="GO:0046933">
    <property type="term" value="F:proton-transporting ATP synthase activity, rotational mechanism"/>
    <property type="evidence" value="ECO:0007669"/>
    <property type="project" value="TreeGrafter"/>
</dbReference>
<dbReference type="FunFam" id="1.20.5.2210:FF:000002">
    <property type="entry name" value="ATP synthase subunit 4 mitochondrial"/>
    <property type="match status" value="1"/>
</dbReference>
<dbReference type="Gene3D" id="1.20.5.2210">
    <property type="match status" value="1"/>
</dbReference>
<dbReference type="InterPro" id="IPR008688">
    <property type="entry name" value="ATP_synth_Bsub_B/MI25"/>
</dbReference>
<dbReference type="InterPro" id="IPR013837">
    <property type="entry name" value="ATP_synth_F0_suB"/>
</dbReference>
<dbReference type="PANTHER" id="PTHR12733:SF3">
    <property type="entry name" value="ATP SYNTHASE F(0) COMPLEX SUBUNIT B1, MITOCHONDRIAL"/>
    <property type="match status" value="1"/>
</dbReference>
<dbReference type="PANTHER" id="PTHR12733">
    <property type="entry name" value="MITOCHONDRIAL ATP SYNTHASE B CHAIN"/>
    <property type="match status" value="1"/>
</dbReference>
<dbReference type="Pfam" id="PF05405">
    <property type="entry name" value="Mt_ATP-synt_B"/>
    <property type="match status" value="1"/>
</dbReference>
<dbReference type="SUPFAM" id="SSF161060">
    <property type="entry name" value="ATP synthase B chain-like"/>
    <property type="match status" value="1"/>
</dbReference>
<organism>
    <name type="scientific">Kluyveromyces lactis (strain ATCC 8585 / CBS 2359 / DSM 70799 / NBRC 1267 / NRRL Y-1140 / WM37)</name>
    <name type="common">Yeast</name>
    <name type="synonym">Candida sphaerica</name>
    <dbReference type="NCBI Taxonomy" id="284590"/>
    <lineage>
        <taxon>Eukaryota</taxon>
        <taxon>Fungi</taxon>
        <taxon>Dikarya</taxon>
        <taxon>Ascomycota</taxon>
        <taxon>Saccharomycotina</taxon>
        <taxon>Saccharomycetes</taxon>
        <taxon>Saccharomycetales</taxon>
        <taxon>Saccharomycetaceae</taxon>
        <taxon>Kluyveromyces</taxon>
    </lineage>
</organism>
<keyword id="KW-0138">CF(0)</keyword>
<keyword id="KW-0375">Hydrogen ion transport</keyword>
<keyword id="KW-0406">Ion transport</keyword>
<keyword id="KW-0472">Membrane</keyword>
<keyword id="KW-0496">Mitochondrion</keyword>
<keyword id="KW-0999">Mitochondrion inner membrane</keyword>
<keyword id="KW-1185">Reference proteome</keyword>
<keyword id="KW-0809">Transit peptide</keyword>
<keyword id="KW-0813">Transport</keyword>
<protein>
    <recommendedName>
        <fullName>ATP synthase subunit 4, mitochondrial</fullName>
    </recommendedName>
</protein>
<gene>
    <name type="primary">ATP4</name>
    <name type="ordered locus">KLLA0E23639g</name>
</gene>
<evidence type="ECO:0000250" key="1"/>
<evidence type="ECO:0000305" key="2"/>
<proteinExistence type="inferred from homology"/>
<reference key="1">
    <citation type="journal article" date="1998" name="Mol. Gen. Genet.">
        <title>Suppression of rho0 lethality by mitochondrial ATP synthase F1 mutations in Kluyveromyces lactis occurs in the absence of F0.</title>
        <authorList>
            <person name="Chen X.J."/>
            <person name="Hansbro P.M."/>
            <person name="Clark-Walker G.D."/>
        </authorList>
    </citation>
    <scope>NUCLEOTIDE SEQUENCE [GENOMIC DNA]</scope>
    <source>
        <strain>ATCC 76492 / CBS 2359/152 / CLIB 210</strain>
    </source>
</reference>
<reference key="2">
    <citation type="journal article" date="2004" name="Nature">
        <title>Genome evolution in yeasts.</title>
        <authorList>
            <person name="Dujon B."/>
            <person name="Sherman D."/>
            <person name="Fischer G."/>
            <person name="Durrens P."/>
            <person name="Casaregola S."/>
            <person name="Lafontaine I."/>
            <person name="de Montigny J."/>
            <person name="Marck C."/>
            <person name="Neuveglise C."/>
            <person name="Talla E."/>
            <person name="Goffard N."/>
            <person name="Frangeul L."/>
            <person name="Aigle M."/>
            <person name="Anthouard V."/>
            <person name="Babour A."/>
            <person name="Barbe V."/>
            <person name="Barnay S."/>
            <person name="Blanchin S."/>
            <person name="Beckerich J.-M."/>
            <person name="Beyne E."/>
            <person name="Bleykasten C."/>
            <person name="Boisrame A."/>
            <person name="Boyer J."/>
            <person name="Cattolico L."/>
            <person name="Confanioleri F."/>
            <person name="de Daruvar A."/>
            <person name="Despons L."/>
            <person name="Fabre E."/>
            <person name="Fairhead C."/>
            <person name="Ferry-Dumazet H."/>
            <person name="Groppi A."/>
            <person name="Hantraye F."/>
            <person name="Hennequin C."/>
            <person name="Jauniaux N."/>
            <person name="Joyet P."/>
            <person name="Kachouri R."/>
            <person name="Kerrest A."/>
            <person name="Koszul R."/>
            <person name="Lemaire M."/>
            <person name="Lesur I."/>
            <person name="Ma L."/>
            <person name="Muller H."/>
            <person name="Nicaud J.-M."/>
            <person name="Nikolski M."/>
            <person name="Oztas S."/>
            <person name="Ozier-Kalogeropoulos O."/>
            <person name="Pellenz S."/>
            <person name="Potier S."/>
            <person name="Richard G.-F."/>
            <person name="Straub M.-L."/>
            <person name="Suleau A."/>
            <person name="Swennen D."/>
            <person name="Tekaia F."/>
            <person name="Wesolowski-Louvel M."/>
            <person name="Westhof E."/>
            <person name="Wirth B."/>
            <person name="Zeniou-Meyer M."/>
            <person name="Zivanovic Y."/>
            <person name="Bolotin-Fukuhara M."/>
            <person name="Thierry A."/>
            <person name="Bouchier C."/>
            <person name="Caudron B."/>
            <person name="Scarpelli C."/>
            <person name="Gaillardin C."/>
            <person name="Weissenbach J."/>
            <person name="Wincker P."/>
            <person name="Souciet J.-L."/>
        </authorList>
    </citation>
    <scope>NUCLEOTIDE SEQUENCE [LARGE SCALE GENOMIC DNA]</scope>
    <source>
        <strain>ATCC 8585 / CBS 2359 / DSM 70799 / NBRC 1267 / NRRL Y-1140 / WM37</strain>
    </source>
</reference>